<organism>
    <name type="scientific">Shigella flexneri</name>
    <dbReference type="NCBI Taxonomy" id="623"/>
    <lineage>
        <taxon>Bacteria</taxon>
        <taxon>Pseudomonadati</taxon>
        <taxon>Pseudomonadota</taxon>
        <taxon>Gammaproteobacteria</taxon>
        <taxon>Enterobacterales</taxon>
        <taxon>Enterobacteriaceae</taxon>
        <taxon>Shigella</taxon>
    </lineage>
</organism>
<accession>P0ACK9</accession>
<accession>P11554</accession>
<protein>
    <recommendedName>
        <fullName>L-fucose operon activator</fullName>
    </recommendedName>
</protein>
<dbReference type="EMBL" id="AE005674">
    <property type="protein sequence ID" value="AAN44306.2"/>
    <property type="molecule type" value="Genomic_DNA"/>
</dbReference>
<dbReference type="EMBL" id="AE014073">
    <property type="protein sequence ID" value="AAP18131.1"/>
    <property type="molecule type" value="Genomic_DNA"/>
</dbReference>
<dbReference type="RefSeq" id="NP_708599.2">
    <property type="nucleotide sequence ID" value="NC_004337.2"/>
</dbReference>
<dbReference type="RefSeq" id="WP_000642344.1">
    <property type="nucleotide sequence ID" value="NZ_WPGW01000008.1"/>
</dbReference>
<dbReference type="SMR" id="P0ACK9"/>
<dbReference type="STRING" id="198214.SF2819"/>
<dbReference type="PaxDb" id="198214-SF2819"/>
<dbReference type="GeneID" id="1025822"/>
<dbReference type="GeneID" id="93779193"/>
<dbReference type="KEGG" id="sfl:SF2819"/>
<dbReference type="KEGG" id="sfx:S3014"/>
<dbReference type="PATRIC" id="fig|198214.7.peg.3356"/>
<dbReference type="HOGENOM" id="CLU_060699_1_2_6"/>
<dbReference type="Proteomes" id="UP000001006">
    <property type="component" value="Chromosome"/>
</dbReference>
<dbReference type="Proteomes" id="UP000002673">
    <property type="component" value="Chromosome"/>
</dbReference>
<dbReference type="GO" id="GO:0003677">
    <property type="term" value="F:DNA binding"/>
    <property type="evidence" value="ECO:0007669"/>
    <property type="project" value="UniProtKB-KW"/>
</dbReference>
<dbReference type="GO" id="GO:0003700">
    <property type="term" value="F:DNA-binding transcription factor activity"/>
    <property type="evidence" value="ECO:0007669"/>
    <property type="project" value="InterPro"/>
</dbReference>
<dbReference type="GO" id="GO:0006004">
    <property type="term" value="P:fucose metabolic process"/>
    <property type="evidence" value="ECO:0007669"/>
    <property type="project" value="UniProtKB-KW"/>
</dbReference>
<dbReference type="FunFam" id="3.40.50.1360:FF:000007">
    <property type="entry name" value="L-fucose operon activator"/>
    <property type="match status" value="1"/>
</dbReference>
<dbReference type="Gene3D" id="3.40.50.1360">
    <property type="match status" value="1"/>
</dbReference>
<dbReference type="Gene3D" id="1.10.10.10">
    <property type="entry name" value="Winged helix-like DNA-binding domain superfamily/Winged helix DNA-binding domain"/>
    <property type="match status" value="1"/>
</dbReference>
<dbReference type="InterPro" id="IPR050313">
    <property type="entry name" value="Carb_Metab_HTH_regulators"/>
</dbReference>
<dbReference type="InterPro" id="IPR014036">
    <property type="entry name" value="DeoR-like_C"/>
</dbReference>
<dbReference type="InterPro" id="IPR001034">
    <property type="entry name" value="DeoR_HTH"/>
</dbReference>
<dbReference type="InterPro" id="IPR037171">
    <property type="entry name" value="NagB/RpiA_transferase-like"/>
</dbReference>
<dbReference type="InterPro" id="IPR018356">
    <property type="entry name" value="Tscrpt_reg_HTH_DeoR_CS"/>
</dbReference>
<dbReference type="InterPro" id="IPR036388">
    <property type="entry name" value="WH-like_DNA-bd_sf"/>
</dbReference>
<dbReference type="InterPro" id="IPR036390">
    <property type="entry name" value="WH_DNA-bd_sf"/>
</dbReference>
<dbReference type="NCBIfam" id="NF007720">
    <property type="entry name" value="PRK10411.1"/>
    <property type="match status" value="1"/>
</dbReference>
<dbReference type="PANTHER" id="PTHR30363">
    <property type="entry name" value="HTH-TYPE TRANSCRIPTIONAL REGULATOR SRLR-RELATED"/>
    <property type="match status" value="1"/>
</dbReference>
<dbReference type="PANTHER" id="PTHR30363:SF49">
    <property type="entry name" value="L-FUCOSE OPERON ACTIVATOR"/>
    <property type="match status" value="1"/>
</dbReference>
<dbReference type="Pfam" id="PF00455">
    <property type="entry name" value="DeoRC"/>
    <property type="match status" value="1"/>
</dbReference>
<dbReference type="Pfam" id="PF08220">
    <property type="entry name" value="HTH_DeoR"/>
    <property type="match status" value="1"/>
</dbReference>
<dbReference type="PRINTS" id="PR00037">
    <property type="entry name" value="HTHLACR"/>
</dbReference>
<dbReference type="SMART" id="SM01134">
    <property type="entry name" value="DeoRC"/>
    <property type="match status" value="1"/>
</dbReference>
<dbReference type="SMART" id="SM00420">
    <property type="entry name" value="HTH_DEOR"/>
    <property type="match status" value="1"/>
</dbReference>
<dbReference type="SUPFAM" id="SSF100950">
    <property type="entry name" value="NagB/RpiA/CoA transferase-like"/>
    <property type="match status" value="1"/>
</dbReference>
<dbReference type="SUPFAM" id="SSF46785">
    <property type="entry name" value="Winged helix' DNA-binding domain"/>
    <property type="match status" value="1"/>
</dbReference>
<dbReference type="PROSITE" id="PS00894">
    <property type="entry name" value="HTH_DEOR_1"/>
    <property type="match status" value="1"/>
</dbReference>
<dbReference type="PROSITE" id="PS51000">
    <property type="entry name" value="HTH_DEOR_2"/>
    <property type="match status" value="1"/>
</dbReference>
<comment type="function">
    <text evidence="1">Transcriptional activator of the fuc operon.</text>
</comment>
<keyword id="KW-0010">Activator</keyword>
<keyword id="KW-0119">Carbohydrate metabolism</keyword>
<keyword id="KW-0238">DNA-binding</keyword>
<keyword id="KW-0294">Fucose metabolism</keyword>
<keyword id="KW-1185">Reference proteome</keyword>
<keyword id="KW-0804">Transcription</keyword>
<keyword id="KW-0805">Transcription regulation</keyword>
<evidence type="ECO:0000250" key="1"/>
<evidence type="ECO:0000255" key="2">
    <source>
        <dbReference type="PROSITE-ProRule" id="PRU00349"/>
    </source>
</evidence>
<proteinExistence type="inferred from homology"/>
<gene>
    <name type="primary">fucR</name>
    <name type="ordered locus">SF2819</name>
    <name type="ordered locus">S3014</name>
</gene>
<name>FUCR_SHIFL</name>
<sequence length="243" mass="27362">MKAARQQAIVDLLLNHTSLTTEALSEQLKVSKETIRRDLNELQTQGKILRNHGRAKYIHRQNQDSGDPFHIRLKSHYAHKADIAREALAWIEEGMVIALDASSTCWYLARQLPDINIQVFTNSHPICHELGKRERIQLISSGGTLERKYGCYVNPSLISQLKSLEIDLFIFSCEGIDSSGALWDSNAINADYKSMLLKRAAQSLLLIDKSKFNRSGEARIGHLDEVTHIISDERQVATSLVTA</sequence>
<feature type="chain" id="PRO_0000050248" description="L-fucose operon activator">
    <location>
        <begin position="1"/>
        <end position="243"/>
    </location>
</feature>
<feature type="domain" description="HTH deoR-type" evidence="2">
    <location>
        <begin position="1"/>
        <end position="57"/>
    </location>
</feature>
<feature type="DNA-binding region" description="H-T-H motif" evidence="2">
    <location>
        <begin position="19"/>
        <end position="38"/>
    </location>
</feature>
<reference key="1">
    <citation type="journal article" date="2002" name="Nucleic Acids Res.">
        <title>Genome sequence of Shigella flexneri 2a: insights into pathogenicity through comparison with genomes of Escherichia coli K12 and O157.</title>
        <authorList>
            <person name="Jin Q."/>
            <person name="Yuan Z."/>
            <person name="Xu J."/>
            <person name="Wang Y."/>
            <person name="Shen Y."/>
            <person name="Lu W."/>
            <person name="Wang J."/>
            <person name="Liu H."/>
            <person name="Yang J."/>
            <person name="Yang F."/>
            <person name="Zhang X."/>
            <person name="Zhang J."/>
            <person name="Yang G."/>
            <person name="Wu H."/>
            <person name="Qu D."/>
            <person name="Dong J."/>
            <person name="Sun L."/>
            <person name="Xue Y."/>
            <person name="Zhao A."/>
            <person name="Gao Y."/>
            <person name="Zhu J."/>
            <person name="Kan B."/>
            <person name="Ding K."/>
            <person name="Chen S."/>
            <person name="Cheng H."/>
            <person name="Yao Z."/>
            <person name="He B."/>
            <person name="Chen R."/>
            <person name="Ma D."/>
            <person name="Qiang B."/>
            <person name="Wen Y."/>
            <person name="Hou Y."/>
            <person name="Yu J."/>
        </authorList>
    </citation>
    <scope>NUCLEOTIDE SEQUENCE [LARGE SCALE GENOMIC DNA]</scope>
    <source>
        <strain>301 / Serotype 2a</strain>
    </source>
</reference>
<reference key="2">
    <citation type="journal article" date="2003" name="Infect. Immun.">
        <title>Complete genome sequence and comparative genomics of Shigella flexneri serotype 2a strain 2457T.</title>
        <authorList>
            <person name="Wei J."/>
            <person name="Goldberg M.B."/>
            <person name="Burland V."/>
            <person name="Venkatesan M.M."/>
            <person name="Deng W."/>
            <person name="Fournier G."/>
            <person name="Mayhew G.F."/>
            <person name="Plunkett G. III"/>
            <person name="Rose D.J."/>
            <person name="Darling A."/>
            <person name="Mau B."/>
            <person name="Perna N.T."/>
            <person name="Payne S.M."/>
            <person name="Runyen-Janecky L.J."/>
            <person name="Zhou S."/>
            <person name="Schwartz D.C."/>
            <person name="Blattner F.R."/>
        </authorList>
    </citation>
    <scope>NUCLEOTIDE SEQUENCE [LARGE SCALE GENOMIC DNA]</scope>
    <source>
        <strain>ATCC 700930 / 2457T / Serotype 2a</strain>
    </source>
</reference>